<gene>
    <name type="ordered locus">YJR079W</name>
    <name type="ORF">J1843</name>
</gene>
<name>YJ49_YEAST</name>
<keyword id="KW-1185">Reference proteome</keyword>
<accession>P47126</accession>
<accession>D6VWP9</accession>
<protein>
    <recommendedName>
        <fullName>Uncharacterized protein YJR079W</fullName>
    </recommendedName>
</protein>
<proteinExistence type="evidence at protein level"/>
<organism>
    <name type="scientific">Saccharomyces cerevisiae (strain ATCC 204508 / S288c)</name>
    <name type="common">Baker's yeast</name>
    <dbReference type="NCBI Taxonomy" id="559292"/>
    <lineage>
        <taxon>Eukaryota</taxon>
        <taxon>Fungi</taxon>
        <taxon>Dikarya</taxon>
        <taxon>Ascomycota</taxon>
        <taxon>Saccharomycotina</taxon>
        <taxon>Saccharomycetes</taxon>
        <taxon>Saccharomycetales</taxon>
        <taxon>Saccharomycetaceae</taxon>
        <taxon>Saccharomyces</taxon>
    </lineage>
</organism>
<comment type="miscellaneous">
    <text evidence="1">Present with 907 molecules/cell in log phase SD medium.</text>
</comment>
<reference key="1">
    <citation type="journal article" date="1996" name="Yeast">
        <title>Analysis of a 62 kb DNA sequence of chromosome X reveals 36 open reading frames and a gene cluster with a counterpart on chromosome XI.</title>
        <authorList>
            <person name="Huang M.-E."/>
            <person name="Manus V."/>
            <person name="Chuat J.-C."/>
            <person name="Galibert F."/>
        </authorList>
    </citation>
    <scope>NUCLEOTIDE SEQUENCE [GENOMIC DNA]</scope>
    <source>
        <strain>ATCC 204508 / S288c</strain>
    </source>
</reference>
<reference key="2">
    <citation type="journal article" date="1996" name="EMBO J.">
        <title>Complete nucleotide sequence of Saccharomyces cerevisiae chromosome X.</title>
        <authorList>
            <person name="Galibert F."/>
            <person name="Alexandraki D."/>
            <person name="Baur A."/>
            <person name="Boles E."/>
            <person name="Chalwatzis N."/>
            <person name="Chuat J.-C."/>
            <person name="Coster F."/>
            <person name="Cziepluch C."/>
            <person name="de Haan M."/>
            <person name="Domdey H."/>
            <person name="Durand P."/>
            <person name="Entian K.-D."/>
            <person name="Gatius M."/>
            <person name="Goffeau A."/>
            <person name="Grivell L.A."/>
            <person name="Hennemann A."/>
            <person name="Herbert C.J."/>
            <person name="Heumann K."/>
            <person name="Hilger F."/>
            <person name="Hollenberg C.P."/>
            <person name="Huang M.-E."/>
            <person name="Jacq C."/>
            <person name="Jauniaux J.-C."/>
            <person name="Katsoulou C."/>
            <person name="Kirchrath L."/>
            <person name="Kleine K."/>
            <person name="Kordes E."/>
            <person name="Koetter P."/>
            <person name="Liebl S."/>
            <person name="Louis E.J."/>
            <person name="Manus V."/>
            <person name="Mewes H.-W."/>
            <person name="Miosga T."/>
            <person name="Obermaier B."/>
            <person name="Perea J."/>
            <person name="Pohl T.M."/>
            <person name="Portetelle D."/>
            <person name="Pujol A."/>
            <person name="Purnelle B."/>
            <person name="Ramezani Rad M."/>
            <person name="Rasmussen S.W."/>
            <person name="Rose M."/>
            <person name="Rossau R."/>
            <person name="Schaaff-Gerstenschlaeger I."/>
            <person name="Smits P.H.M."/>
            <person name="Scarcez T."/>
            <person name="Soriano N."/>
            <person name="To Van D."/>
            <person name="Tzermia M."/>
            <person name="Van Broekhoven A."/>
            <person name="Vandenbol M."/>
            <person name="Wedler H."/>
            <person name="von Wettstein D."/>
            <person name="Wambutt R."/>
            <person name="Zagulski M."/>
            <person name="Zollner A."/>
            <person name="Karpfinger-Hartl L."/>
        </authorList>
    </citation>
    <scope>NUCLEOTIDE SEQUENCE [LARGE SCALE GENOMIC DNA]</scope>
    <source>
        <strain>ATCC 204508 / S288c</strain>
    </source>
</reference>
<reference key="3">
    <citation type="journal article" date="2014" name="G3 (Bethesda)">
        <title>The reference genome sequence of Saccharomyces cerevisiae: Then and now.</title>
        <authorList>
            <person name="Engel S.R."/>
            <person name="Dietrich F.S."/>
            <person name="Fisk D.G."/>
            <person name="Binkley G."/>
            <person name="Balakrishnan R."/>
            <person name="Costanzo M.C."/>
            <person name="Dwight S.S."/>
            <person name="Hitz B.C."/>
            <person name="Karra K."/>
            <person name="Nash R.S."/>
            <person name="Weng S."/>
            <person name="Wong E.D."/>
            <person name="Lloyd P."/>
            <person name="Skrzypek M.S."/>
            <person name="Miyasato S.R."/>
            <person name="Simison M."/>
            <person name="Cherry J.M."/>
        </authorList>
    </citation>
    <scope>GENOME REANNOTATION</scope>
    <source>
        <strain>ATCC 204508 / S288c</strain>
    </source>
</reference>
<reference key="4">
    <citation type="journal article" date="2003" name="Nature">
        <title>Global analysis of protein expression in yeast.</title>
        <authorList>
            <person name="Ghaemmaghami S."/>
            <person name="Huh W.-K."/>
            <person name="Bower K."/>
            <person name="Howson R.W."/>
            <person name="Belle A."/>
            <person name="Dephoure N."/>
            <person name="O'Shea E.K."/>
            <person name="Weissman J.S."/>
        </authorList>
    </citation>
    <scope>LEVEL OF PROTEIN EXPRESSION [LARGE SCALE ANALYSIS]</scope>
</reference>
<evidence type="ECO:0000269" key="1">
    <source>
    </source>
</evidence>
<sequence>MKIKIDIIHFINAPPFFFFFVDAEASQLKAFQLFLLGHIFYTYIHTYICDFDEFETKDLAEGKIGDLISRLEFCSNAIIESLPNTFQSFVPVKFSTDKLLEESKGLLDV</sequence>
<dbReference type="EMBL" id="Z49578">
    <property type="protein sequence ID" value="CAA89607.1"/>
    <property type="molecule type" value="Genomic_DNA"/>
</dbReference>
<dbReference type="EMBL" id="BK006943">
    <property type="protein sequence ID" value="DAA08865.1"/>
    <property type="molecule type" value="Genomic_DNA"/>
</dbReference>
<dbReference type="PIR" id="S57098">
    <property type="entry name" value="S57098"/>
</dbReference>
<dbReference type="RefSeq" id="NP_012613.1">
    <property type="nucleotide sequence ID" value="NM_001181737.1"/>
</dbReference>
<dbReference type="BioGRID" id="33835">
    <property type="interactions" value="29"/>
</dbReference>
<dbReference type="DIP" id="DIP-4478N"/>
<dbReference type="FunCoup" id="P47126">
    <property type="interactions" value="38"/>
</dbReference>
<dbReference type="STRING" id="4932.YJR079W"/>
<dbReference type="PaxDb" id="4932-YJR079W"/>
<dbReference type="EnsemblFungi" id="YJR079W_mRNA">
    <property type="protein sequence ID" value="YJR079W"/>
    <property type="gene ID" value="YJR079W"/>
</dbReference>
<dbReference type="GeneID" id="853542"/>
<dbReference type="KEGG" id="sce:YJR079W"/>
<dbReference type="AGR" id="SGD:S000003840"/>
<dbReference type="SGD" id="S000003840">
    <property type="gene designation" value="YJR079W"/>
</dbReference>
<dbReference type="VEuPathDB" id="FungiDB:YJR079W"/>
<dbReference type="HOGENOM" id="CLU_2199046_0_0_1"/>
<dbReference type="InParanoid" id="P47126"/>
<dbReference type="BioCyc" id="YEAST:G3O-31708-MONOMER"/>
<dbReference type="BioGRID-ORCS" id="853542">
    <property type="hits" value="2 hits in 10 CRISPR screens"/>
</dbReference>
<dbReference type="PRO" id="PR:P47126"/>
<dbReference type="Proteomes" id="UP000002311">
    <property type="component" value="Chromosome X"/>
</dbReference>
<dbReference type="RNAct" id="P47126">
    <property type="molecule type" value="protein"/>
</dbReference>
<feature type="chain" id="PRO_0000203102" description="Uncharacterized protein YJR079W">
    <location>
        <begin position="1"/>
        <end position="109"/>
    </location>
</feature>